<feature type="chain" id="PRO_1000137078" description="Acetylornithine deacetylase">
    <location>
        <begin position="1"/>
        <end position="383"/>
    </location>
</feature>
<feature type="active site" evidence="1">
    <location>
        <position position="82"/>
    </location>
</feature>
<feature type="active site" evidence="1">
    <location>
        <position position="144"/>
    </location>
</feature>
<feature type="binding site" evidence="1">
    <location>
        <position position="80"/>
    </location>
    <ligand>
        <name>Zn(2+)</name>
        <dbReference type="ChEBI" id="CHEBI:29105"/>
        <label>1</label>
    </ligand>
</feature>
<feature type="binding site" evidence="1">
    <location>
        <position position="112"/>
    </location>
    <ligand>
        <name>Zn(2+)</name>
        <dbReference type="ChEBI" id="CHEBI:29105"/>
        <label>1</label>
    </ligand>
</feature>
<feature type="binding site" evidence="1">
    <location>
        <position position="112"/>
    </location>
    <ligand>
        <name>Zn(2+)</name>
        <dbReference type="ChEBI" id="CHEBI:29105"/>
        <label>2</label>
    </ligand>
</feature>
<feature type="binding site" evidence="1">
    <location>
        <position position="145"/>
    </location>
    <ligand>
        <name>Zn(2+)</name>
        <dbReference type="ChEBI" id="CHEBI:29105"/>
        <label>2</label>
    </ligand>
</feature>
<feature type="binding site" evidence="1">
    <location>
        <position position="169"/>
    </location>
    <ligand>
        <name>Zn(2+)</name>
        <dbReference type="ChEBI" id="CHEBI:29105"/>
        <label>1</label>
    </ligand>
</feature>
<feature type="binding site" evidence="1">
    <location>
        <position position="355"/>
    </location>
    <ligand>
        <name>Zn(2+)</name>
        <dbReference type="ChEBI" id="CHEBI:29105"/>
        <label>2</label>
    </ligand>
</feature>
<reference key="1">
    <citation type="journal article" date="2011" name="J. Bacteriol.">
        <title>Comparative genomics of 28 Salmonella enterica isolates: evidence for CRISPR-mediated adaptive sublineage evolution.</title>
        <authorList>
            <person name="Fricke W.F."/>
            <person name="Mammel M.K."/>
            <person name="McDermott P.F."/>
            <person name="Tartera C."/>
            <person name="White D.G."/>
            <person name="Leclerc J.E."/>
            <person name="Ravel J."/>
            <person name="Cebula T.A."/>
        </authorList>
    </citation>
    <scope>NUCLEOTIDE SEQUENCE [LARGE SCALE GENOMIC DNA]</scope>
    <source>
        <strain>SL254</strain>
    </source>
</reference>
<proteinExistence type="inferred from homology"/>
<name>ARGE_SALNS</name>
<gene>
    <name evidence="1" type="primary">argE</name>
    <name type="ordered locus">SNSL254_A4451</name>
</gene>
<evidence type="ECO:0000255" key="1">
    <source>
        <dbReference type="HAMAP-Rule" id="MF_01108"/>
    </source>
</evidence>
<accession>B4T0W8</accession>
<keyword id="KW-0028">Amino-acid biosynthesis</keyword>
<keyword id="KW-0055">Arginine biosynthesis</keyword>
<keyword id="KW-0170">Cobalt</keyword>
<keyword id="KW-0963">Cytoplasm</keyword>
<keyword id="KW-0378">Hydrolase</keyword>
<keyword id="KW-0479">Metal-binding</keyword>
<keyword id="KW-0862">Zinc</keyword>
<dbReference type="EC" id="3.5.1.16" evidence="1"/>
<dbReference type="EMBL" id="CP001113">
    <property type="protein sequence ID" value="ACF61349.1"/>
    <property type="molecule type" value="Genomic_DNA"/>
</dbReference>
<dbReference type="RefSeq" id="WP_000800208.1">
    <property type="nucleotide sequence ID" value="NZ_CCMR01000001.1"/>
</dbReference>
<dbReference type="SMR" id="B4T0W8"/>
<dbReference type="MEROPS" id="M20.974"/>
<dbReference type="KEGG" id="see:SNSL254_A4451"/>
<dbReference type="HOGENOM" id="CLU_021802_2_4_6"/>
<dbReference type="UniPathway" id="UPA00068">
    <property type="reaction ID" value="UER00110"/>
</dbReference>
<dbReference type="Proteomes" id="UP000008824">
    <property type="component" value="Chromosome"/>
</dbReference>
<dbReference type="GO" id="GO:0005737">
    <property type="term" value="C:cytoplasm"/>
    <property type="evidence" value="ECO:0007669"/>
    <property type="project" value="UniProtKB-SubCell"/>
</dbReference>
<dbReference type="GO" id="GO:0008777">
    <property type="term" value="F:acetylornithine deacetylase activity"/>
    <property type="evidence" value="ECO:0007669"/>
    <property type="project" value="UniProtKB-UniRule"/>
</dbReference>
<dbReference type="GO" id="GO:0008270">
    <property type="term" value="F:zinc ion binding"/>
    <property type="evidence" value="ECO:0007669"/>
    <property type="project" value="UniProtKB-UniRule"/>
</dbReference>
<dbReference type="GO" id="GO:0006526">
    <property type="term" value="P:L-arginine biosynthetic process"/>
    <property type="evidence" value="ECO:0007669"/>
    <property type="project" value="UniProtKB-UniRule"/>
</dbReference>
<dbReference type="CDD" id="cd03894">
    <property type="entry name" value="M20_ArgE"/>
    <property type="match status" value="1"/>
</dbReference>
<dbReference type="FunFam" id="3.30.70.360:FF:000003">
    <property type="entry name" value="Acetylornithine deacetylase"/>
    <property type="match status" value="1"/>
</dbReference>
<dbReference type="Gene3D" id="3.30.70.360">
    <property type="match status" value="1"/>
</dbReference>
<dbReference type="Gene3D" id="3.40.630.10">
    <property type="entry name" value="Zn peptidases"/>
    <property type="match status" value="1"/>
</dbReference>
<dbReference type="HAMAP" id="MF_01108">
    <property type="entry name" value="ArgE"/>
    <property type="match status" value="1"/>
</dbReference>
<dbReference type="InterPro" id="IPR010169">
    <property type="entry name" value="AcOrn-deacetyl"/>
</dbReference>
<dbReference type="InterPro" id="IPR001261">
    <property type="entry name" value="ArgE/DapE_CS"/>
</dbReference>
<dbReference type="InterPro" id="IPR036264">
    <property type="entry name" value="Bact_exopeptidase_dim_dom"/>
</dbReference>
<dbReference type="InterPro" id="IPR002933">
    <property type="entry name" value="Peptidase_M20"/>
</dbReference>
<dbReference type="InterPro" id="IPR011650">
    <property type="entry name" value="Peptidase_M20_dimer"/>
</dbReference>
<dbReference type="InterPro" id="IPR050072">
    <property type="entry name" value="Peptidase_M20A"/>
</dbReference>
<dbReference type="NCBIfam" id="TIGR01892">
    <property type="entry name" value="AcOrn-deacetyl"/>
    <property type="match status" value="1"/>
</dbReference>
<dbReference type="NCBIfam" id="NF003474">
    <property type="entry name" value="PRK05111.1"/>
    <property type="match status" value="1"/>
</dbReference>
<dbReference type="PANTHER" id="PTHR43808">
    <property type="entry name" value="ACETYLORNITHINE DEACETYLASE"/>
    <property type="match status" value="1"/>
</dbReference>
<dbReference type="PANTHER" id="PTHR43808:SF1">
    <property type="entry name" value="ACETYLORNITHINE DEACETYLASE"/>
    <property type="match status" value="1"/>
</dbReference>
<dbReference type="Pfam" id="PF07687">
    <property type="entry name" value="M20_dimer"/>
    <property type="match status" value="1"/>
</dbReference>
<dbReference type="Pfam" id="PF01546">
    <property type="entry name" value="Peptidase_M20"/>
    <property type="match status" value="1"/>
</dbReference>
<dbReference type="SUPFAM" id="SSF55031">
    <property type="entry name" value="Bacterial exopeptidase dimerisation domain"/>
    <property type="match status" value="1"/>
</dbReference>
<dbReference type="SUPFAM" id="SSF53187">
    <property type="entry name" value="Zn-dependent exopeptidases"/>
    <property type="match status" value="1"/>
</dbReference>
<dbReference type="PROSITE" id="PS00758">
    <property type="entry name" value="ARGE_DAPE_CPG2_1"/>
    <property type="match status" value="1"/>
</dbReference>
<dbReference type="PROSITE" id="PS00759">
    <property type="entry name" value="ARGE_DAPE_CPG2_2"/>
    <property type="match status" value="1"/>
</dbReference>
<sequence>MKNVLPPFIEIYRALIATPSISATEESLDQSNASLITLLAGWFSDLGFNVEVQPVPGTRNKFNMLASTGHGAGGLLLTGHTDTVPFDDGRWTRDPFTLTEHDNKLYGLGTADMKGFFAFILDALRDVDVTKLKKPLYILATADEETSMAGARYFSETTALRPDCAIIGEPTSLQPIRAHKGHISNVVRVLGQSGHSSDPARGVNAIELMHDAIGHIMQLRDSLKARYHYEAFTVPYPTLNLGHIHGGDASNRICACCELHMDIRPLPGMTLNDLNGLLNDALAPVSERWPGRLTVAELHPPIPGYECPPDHQLVEVVEKLLGTKTDVVNYCTEAPFMQTLCPTLVLGPGSINQAHQPDEYLETRFIKPTRELITQVVHHFCWH</sequence>
<comment type="function">
    <text evidence="1">Catalyzes the hydrolysis of the amide bond of N(2)-acetylated L-amino acids. Cleaves the acetyl group from N-acetyl-L-ornithine to form L-ornithine, an intermediate in L-arginine biosynthesis pathway, and a branchpoint in the synthesis of polyamines.</text>
</comment>
<comment type="catalytic activity">
    <reaction evidence="1">
        <text>N(2)-acetyl-L-ornithine + H2O = L-ornithine + acetate</text>
        <dbReference type="Rhea" id="RHEA:15941"/>
        <dbReference type="ChEBI" id="CHEBI:15377"/>
        <dbReference type="ChEBI" id="CHEBI:30089"/>
        <dbReference type="ChEBI" id="CHEBI:46911"/>
        <dbReference type="ChEBI" id="CHEBI:57805"/>
        <dbReference type="EC" id="3.5.1.16"/>
    </reaction>
</comment>
<comment type="cofactor">
    <cofactor evidence="1">
        <name>Zn(2+)</name>
        <dbReference type="ChEBI" id="CHEBI:29105"/>
    </cofactor>
    <cofactor evidence="1">
        <name>Co(2+)</name>
        <dbReference type="ChEBI" id="CHEBI:48828"/>
    </cofactor>
    <text evidence="1">Binds 2 Zn(2+) or Co(2+) ions per subunit.</text>
</comment>
<comment type="cofactor">
    <cofactor evidence="1">
        <name>glutathione</name>
        <dbReference type="ChEBI" id="CHEBI:57925"/>
    </cofactor>
</comment>
<comment type="pathway">
    <text evidence="1">Amino-acid biosynthesis; L-arginine biosynthesis; L-ornithine from N(2)-acetyl-L-ornithine (linear): step 1/1.</text>
</comment>
<comment type="subunit">
    <text evidence="1">Homodimer.</text>
</comment>
<comment type="subcellular location">
    <subcellularLocation>
        <location evidence="1">Cytoplasm</location>
    </subcellularLocation>
</comment>
<comment type="similarity">
    <text evidence="1">Belongs to the peptidase M20A family. ArgE subfamily.</text>
</comment>
<protein>
    <recommendedName>
        <fullName evidence="1">Acetylornithine deacetylase</fullName>
        <shortName evidence="1">AO</shortName>
        <shortName evidence="1">Acetylornithinase</shortName>
        <ecNumber evidence="1">3.5.1.16</ecNumber>
    </recommendedName>
    <alternativeName>
        <fullName evidence="1">N-acetylornithinase</fullName>
        <shortName evidence="1">NAO</shortName>
    </alternativeName>
</protein>
<organism>
    <name type="scientific">Salmonella newport (strain SL254)</name>
    <dbReference type="NCBI Taxonomy" id="423368"/>
    <lineage>
        <taxon>Bacteria</taxon>
        <taxon>Pseudomonadati</taxon>
        <taxon>Pseudomonadota</taxon>
        <taxon>Gammaproteobacteria</taxon>
        <taxon>Enterobacterales</taxon>
        <taxon>Enterobacteriaceae</taxon>
        <taxon>Salmonella</taxon>
    </lineage>
</organism>